<sequence length="290" mass="31680">MTQTRLHFTTGKIEAERIFAALELAFEDEGLPIAVLEVDEDQDIHEVSLYADGDVDTVEARVKDILAGLALSKPVEREVLPDIDWVARSLEGLKPVRAGRFFVHGAHDRRKRHSGELAIEIEAGLAFGTGHHGTTSGCLEMLEKVVRREHPRNALDLGTGSAVLAIAVAKLAHIPVLATDIDPVAVKVAAANARLNHVKALIETVTAPGFHHPIFGRRAPFDLIVANILARPLMRLAPQMAGHIALGGSIVLSGILERQRDAVISAYVGQNFRHVRTLYREGWVTIHLKH</sequence>
<organism>
    <name type="scientific">Mesorhizobium japonicum (strain LMG 29417 / CECT 9101 / MAFF 303099)</name>
    <name type="common">Mesorhizobium loti (strain MAFF 303099)</name>
    <dbReference type="NCBI Taxonomy" id="266835"/>
    <lineage>
        <taxon>Bacteria</taxon>
        <taxon>Pseudomonadati</taxon>
        <taxon>Pseudomonadota</taxon>
        <taxon>Alphaproteobacteria</taxon>
        <taxon>Hyphomicrobiales</taxon>
        <taxon>Phyllobacteriaceae</taxon>
        <taxon>Mesorhizobium</taxon>
    </lineage>
</organism>
<protein>
    <recommendedName>
        <fullName evidence="1">Ribosomal protein L11 methyltransferase</fullName>
        <shortName evidence="1">L11 Mtase</shortName>
        <ecNumber evidence="1">2.1.1.-</ecNumber>
    </recommendedName>
</protein>
<dbReference type="EC" id="2.1.1.-" evidence="1"/>
<dbReference type="EMBL" id="BA000012">
    <property type="protein sequence ID" value="BAB48884.1"/>
    <property type="molecule type" value="Genomic_DNA"/>
</dbReference>
<dbReference type="RefSeq" id="WP_010910237.1">
    <property type="nucleotide sequence ID" value="NC_002678.2"/>
</dbReference>
<dbReference type="SMR" id="Q98KD0"/>
<dbReference type="KEGG" id="mlo:mlr1533"/>
<dbReference type="eggNOG" id="COG2264">
    <property type="taxonomic scope" value="Bacteria"/>
</dbReference>
<dbReference type="HOGENOM" id="CLU_049382_3_0_5"/>
<dbReference type="Proteomes" id="UP000000552">
    <property type="component" value="Chromosome"/>
</dbReference>
<dbReference type="GO" id="GO:0005737">
    <property type="term" value="C:cytoplasm"/>
    <property type="evidence" value="ECO:0007669"/>
    <property type="project" value="UniProtKB-SubCell"/>
</dbReference>
<dbReference type="GO" id="GO:0016279">
    <property type="term" value="F:protein-lysine N-methyltransferase activity"/>
    <property type="evidence" value="ECO:0007669"/>
    <property type="project" value="RHEA"/>
</dbReference>
<dbReference type="GO" id="GO:0032259">
    <property type="term" value="P:methylation"/>
    <property type="evidence" value="ECO:0007669"/>
    <property type="project" value="UniProtKB-KW"/>
</dbReference>
<dbReference type="CDD" id="cd02440">
    <property type="entry name" value="AdoMet_MTases"/>
    <property type="match status" value="1"/>
</dbReference>
<dbReference type="Gene3D" id="3.40.50.150">
    <property type="entry name" value="Vaccinia Virus protein VP39"/>
    <property type="match status" value="1"/>
</dbReference>
<dbReference type="HAMAP" id="MF_00735">
    <property type="entry name" value="Methyltr_PrmA"/>
    <property type="match status" value="1"/>
</dbReference>
<dbReference type="InterPro" id="IPR050078">
    <property type="entry name" value="Ribosomal_L11_MeTrfase_PrmA"/>
</dbReference>
<dbReference type="InterPro" id="IPR004498">
    <property type="entry name" value="Ribosomal_PrmA_MeTrfase"/>
</dbReference>
<dbReference type="InterPro" id="IPR029063">
    <property type="entry name" value="SAM-dependent_MTases_sf"/>
</dbReference>
<dbReference type="NCBIfam" id="NF001784">
    <property type="entry name" value="PRK00517.2-1"/>
    <property type="match status" value="1"/>
</dbReference>
<dbReference type="PANTHER" id="PTHR43648">
    <property type="entry name" value="ELECTRON TRANSFER FLAVOPROTEIN BETA SUBUNIT LYSINE METHYLTRANSFERASE"/>
    <property type="match status" value="1"/>
</dbReference>
<dbReference type="PANTHER" id="PTHR43648:SF1">
    <property type="entry name" value="ELECTRON TRANSFER FLAVOPROTEIN BETA SUBUNIT LYSINE METHYLTRANSFERASE"/>
    <property type="match status" value="1"/>
</dbReference>
<dbReference type="Pfam" id="PF06325">
    <property type="entry name" value="PrmA"/>
    <property type="match status" value="1"/>
</dbReference>
<dbReference type="PIRSF" id="PIRSF000401">
    <property type="entry name" value="RPL11_MTase"/>
    <property type="match status" value="1"/>
</dbReference>
<dbReference type="SUPFAM" id="SSF53335">
    <property type="entry name" value="S-adenosyl-L-methionine-dependent methyltransferases"/>
    <property type="match status" value="1"/>
</dbReference>
<reference key="1">
    <citation type="journal article" date="2000" name="DNA Res.">
        <title>Complete genome structure of the nitrogen-fixing symbiotic bacterium Mesorhizobium loti.</title>
        <authorList>
            <person name="Kaneko T."/>
            <person name="Nakamura Y."/>
            <person name="Sato S."/>
            <person name="Asamizu E."/>
            <person name="Kato T."/>
            <person name="Sasamoto S."/>
            <person name="Watanabe A."/>
            <person name="Idesawa K."/>
            <person name="Ishikawa A."/>
            <person name="Kawashima K."/>
            <person name="Kimura T."/>
            <person name="Kishida Y."/>
            <person name="Kiyokawa C."/>
            <person name="Kohara M."/>
            <person name="Matsumoto M."/>
            <person name="Matsuno A."/>
            <person name="Mochizuki Y."/>
            <person name="Nakayama S."/>
            <person name="Nakazaki N."/>
            <person name="Shimpo S."/>
            <person name="Sugimoto M."/>
            <person name="Takeuchi C."/>
            <person name="Yamada M."/>
            <person name="Tabata S."/>
        </authorList>
    </citation>
    <scope>NUCLEOTIDE SEQUENCE [LARGE SCALE GENOMIC DNA]</scope>
    <source>
        <strain>LMG 29417 / CECT 9101 / MAFF 303099</strain>
    </source>
</reference>
<accession>Q98KD0</accession>
<evidence type="ECO:0000255" key="1">
    <source>
        <dbReference type="HAMAP-Rule" id="MF_00735"/>
    </source>
</evidence>
<proteinExistence type="inferred from homology"/>
<feature type="chain" id="PRO_0000192296" description="Ribosomal protein L11 methyltransferase">
    <location>
        <begin position="1"/>
        <end position="290"/>
    </location>
</feature>
<feature type="binding site" evidence="1">
    <location>
        <position position="135"/>
    </location>
    <ligand>
        <name>S-adenosyl-L-methionine</name>
        <dbReference type="ChEBI" id="CHEBI:59789"/>
    </ligand>
</feature>
<feature type="binding site" evidence="1">
    <location>
        <position position="158"/>
    </location>
    <ligand>
        <name>S-adenosyl-L-methionine</name>
        <dbReference type="ChEBI" id="CHEBI:59789"/>
    </ligand>
</feature>
<feature type="binding site" evidence="1">
    <location>
        <position position="180"/>
    </location>
    <ligand>
        <name>S-adenosyl-L-methionine</name>
        <dbReference type="ChEBI" id="CHEBI:59789"/>
    </ligand>
</feature>
<feature type="binding site" evidence="1">
    <location>
        <position position="227"/>
    </location>
    <ligand>
        <name>S-adenosyl-L-methionine</name>
        <dbReference type="ChEBI" id="CHEBI:59789"/>
    </ligand>
</feature>
<name>PRMA_RHILO</name>
<comment type="function">
    <text evidence="1">Methylates ribosomal protein L11.</text>
</comment>
<comment type="catalytic activity">
    <reaction evidence="1">
        <text>L-lysyl-[protein] + 3 S-adenosyl-L-methionine = N(6),N(6),N(6)-trimethyl-L-lysyl-[protein] + 3 S-adenosyl-L-homocysteine + 3 H(+)</text>
        <dbReference type="Rhea" id="RHEA:54192"/>
        <dbReference type="Rhea" id="RHEA-COMP:9752"/>
        <dbReference type="Rhea" id="RHEA-COMP:13826"/>
        <dbReference type="ChEBI" id="CHEBI:15378"/>
        <dbReference type="ChEBI" id="CHEBI:29969"/>
        <dbReference type="ChEBI" id="CHEBI:57856"/>
        <dbReference type="ChEBI" id="CHEBI:59789"/>
        <dbReference type="ChEBI" id="CHEBI:61961"/>
    </reaction>
</comment>
<comment type="subcellular location">
    <subcellularLocation>
        <location evidence="1">Cytoplasm</location>
    </subcellularLocation>
</comment>
<comment type="similarity">
    <text evidence="1">Belongs to the methyltransferase superfamily. PrmA family.</text>
</comment>
<keyword id="KW-0963">Cytoplasm</keyword>
<keyword id="KW-0489">Methyltransferase</keyword>
<keyword id="KW-0949">S-adenosyl-L-methionine</keyword>
<keyword id="KW-0808">Transferase</keyword>
<gene>
    <name evidence="1" type="primary">prmA</name>
    <name type="ordered locus">mlr1533</name>
</gene>